<feature type="chain" id="PRO_0000272476" description="Phosphate import ATP-binding protein PstB">
    <location>
        <begin position="1"/>
        <end position="291"/>
    </location>
</feature>
<feature type="domain" description="ABC transporter" evidence="1">
    <location>
        <begin position="44"/>
        <end position="286"/>
    </location>
</feature>
<feature type="binding site" evidence="1">
    <location>
        <begin position="76"/>
        <end position="83"/>
    </location>
    <ligand>
        <name>ATP</name>
        <dbReference type="ChEBI" id="CHEBI:30616"/>
    </ligand>
</feature>
<proteinExistence type="inferred from homology"/>
<reference key="1">
    <citation type="submission" date="2006-06" db="EMBL/GenBank/DDBJ databases">
        <title>Complete sequence of chromosome of Mesorhizobium sp. BNC1.</title>
        <authorList>
            <consortium name="US DOE Joint Genome Institute"/>
            <person name="Copeland A."/>
            <person name="Lucas S."/>
            <person name="Lapidus A."/>
            <person name="Barry K."/>
            <person name="Detter J.C."/>
            <person name="Glavina del Rio T."/>
            <person name="Hammon N."/>
            <person name="Israni S."/>
            <person name="Dalin E."/>
            <person name="Tice H."/>
            <person name="Pitluck S."/>
            <person name="Chertkov O."/>
            <person name="Brettin T."/>
            <person name="Bruce D."/>
            <person name="Han C."/>
            <person name="Tapia R."/>
            <person name="Gilna P."/>
            <person name="Schmutz J."/>
            <person name="Larimer F."/>
            <person name="Land M."/>
            <person name="Hauser L."/>
            <person name="Kyrpides N."/>
            <person name="Mikhailova N."/>
            <person name="Richardson P."/>
        </authorList>
    </citation>
    <scope>NUCLEOTIDE SEQUENCE [LARGE SCALE GENOMIC DNA]</scope>
    <source>
        <strain>BNC1</strain>
    </source>
</reference>
<comment type="function">
    <text evidence="1">Part of the ABC transporter complex PstSACB involved in phosphate import. Responsible for energy coupling to the transport system.</text>
</comment>
<comment type="catalytic activity">
    <reaction evidence="1">
        <text>phosphate(out) + ATP + H2O = ADP + 2 phosphate(in) + H(+)</text>
        <dbReference type="Rhea" id="RHEA:24440"/>
        <dbReference type="ChEBI" id="CHEBI:15377"/>
        <dbReference type="ChEBI" id="CHEBI:15378"/>
        <dbReference type="ChEBI" id="CHEBI:30616"/>
        <dbReference type="ChEBI" id="CHEBI:43474"/>
        <dbReference type="ChEBI" id="CHEBI:456216"/>
        <dbReference type="EC" id="7.3.2.1"/>
    </reaction>
</comment>
<comment type="subunit">
    <text evidence="1">The complex is composed of two ATP-binding proteins (PstB), two transmembrane proteins (PstC and PstA) and a solute-binding protein (PstS).</text>
</comment>
<comment type="subcellular location">
    <subcellularLocation>
        <location evidence="1">Cell inner membrane</location>
        <topology evidence="1">Peripheral membrane protein</topology>
    </subcellularLocation>
</comment>
<comment type="similarity">
    <text evidence="1">Belongs to the ABC transporter superfamily. Phosphate importer (TC 3.A.1.7) family.</text>
</comment>
<dbReference type="EC" id="7.3.2.1" evidence="1"/>
<dbReference type="EMBL" id="CP000390">
    <property type="protein sequence ID" value="ABG64490.1"/>
    <property type="molecule type" value="Genomic_DNA"/>
</dbReference>
<dbReference type="SMR" id="Q11DN5"/>
<dbReference type="STRING" id="266779.Meso_3118"/>
<dbReference type="KEGG" id="mes:Meso_3118"/>
<dbReference type="eggNOG" id="COG1117">
    <property type="taxonomic scope" value="Bacteria"/>
</dbReference>
<dbReference type="HOGENOM" id="CLU_000604_1_22_5"/>
<dbReference type="OrthoDB" id="9802264at2"/>
<dbReference type="GO" id="GO:0005886">
    <property type="term" value="C:plasma membrane"/>
    <property type="evidence" value="ECO:0007669"/>
    <property type="project" value="UniProtKB-SubCell"/>
</dbReference>
<dbReference type="GO" id="GO:0005524">
    <property type="term" value="F:ATP binding"/>
    <property type="evidence" value="ECO:0007669"/>
    <property type="project" value="UniProtKB-KW"/>
</dbReference>
<dbReference type="GO" id="GO:0016887">
    <property type="term" value="F:ATP hydrolysis activity"/>
    <property type="evidence" value="ECO:0007669"/>
    <property type="project" value="InterPro"/>
</dbReference>
<dbReference type="GO" id="GO:0015415">
    <property type="term" value="F:ATPase-coupled phosphate ion transmembrane transporter activity"/>
    <property type="evidence" value="ECO:0007669"/>
    <property type="project" value="UniProtKB-EC"/>
</dbReference>
<dbReference type="GO" id="GO:0035435">
    <property type="term" value="P:phosphate ion transmembrane transport"/>
    <property type="evidence" value="ECO:0007669"/>
    <property type="project" value="InterPro"/>
</dbReference>
<dbReference type="CDD" id="cd03260">
    <property type="entry name" value="ABC_PstB_phosphate_transporter"/>
    <property type="match status" value="1"/>
</dbReference>
<dbReference type="Gene3D" id="3.40.50.300">
    <property type="entry name" value="P-loop containing nucleotide triphosphate hydrolases"/>
    <property type="match status" value="1"/>
</dbReference>
<dbReference type="InterPro" id="IPR003593">
    <property type="entry name" value="AAA+_ATPase"/>
</dbReference>
<dbReference type="InterPro" id="IPR003439">
    <property type="entry name" value="ABC_transporter-like_ATP-bd"/>
</dbReference>
<dbReference type="InterPro" id="IPR017871">
    <property type="entry name" value="ABC_transporter-like_CS"/>
</dbReference>
<dbReference type="InterPro" id="IPR027417">
    <property type="entry name" value="P-loop_NTPase"/>
</dbReference>
<dbReference type="InterPro" id="IPR005670">
    <property type="entry name" value="PstB-like"/>
</dbReference>
<dbReference type="NCBIfam" id="TIGR00972">
    <property type="entry name" value="3a0107s01c2"/>
    <property type="match status" value="1"/>
</dbReference>
<dbReference type="PANTHER" id="PTHR43423">
    <property type="entry name" value="ABC TRANSPORTER I FAMILY MEMBER 17"/>
    <property type="match status" value="1"/>
</dbReference>
<dbReference type="PANTHER" id="PTHR43423:SF1">
    <property type="entry name" value="ABC TRANSPORTER I FAMILY MEMBER 17"/>
    <property type="match status" value="1"/>
</dbReference>
<dbReference type="Pfam" id="PF00005">
    <property type="entry name" value="ABC_tran"/>
    <property type="match status" value="1"/>
</dbReference>
<dbReference type="SMART" id="SM00382">
    <property type="entry name" value="AAA"/>
    <property type="match status" value="1"/>
</dbReference>
<dbReference type="SUPFAM" id="SSF52540">
    <property type="entry name" value="P-loop containing nucleoside triphosphate hydrolases"/>
    <property type="match status" value="1"/>
</dbReference>
<dbReference type="PROSITE" id="PS00211">
    <property type="entry name" value="ABC_TRANSPORTER_1"/>
    <property type="match status" value="1"/>
</dbReference>
<dbReference type="PROSITE" id="PS50893">
    <property type="entry name" value="ABC_TRANSPORTER_2"/>
    <property type="match status" value="1"/>
</dbReference>
<dbReference type="PROSITE" id="PS51238">
    <property type="entry name" value="PSTB"/>
    <property type="match status" value="1"/>
</dbReference>
<protein>
    <recommendedName>
        <fullName evidence="1">Phosphate import ATP-binding protein PstB</fullName>
        <ecNumber evidence="1">7.3.2.1</ecNumber>
    </recommendedName>
    <alternativeName>
        <fullName evidence="1">ABC phosphate transporter</fullName>
    </alternativeName>
    <alternativeName>
        <fullName evidence="1">Phosphate-transporting ATPase</fullName>
    </alternativeName>
</protein>
<sequence length="291" mass="32350">MNNEHAEVMEMHMPTEKIVGQTDLYSIKSSTVRTPDAMPRPIRVKAREVNVFYGSKQALFDVSIDVPERAVTAFIGPSGCGKSTFLRCFNRMNDTIEGSKVTGRIELDGADIYDGSIDVVELRARIGMVFQKPNPFPKSIYENVAYGPRIHGLASAKGDLDRIVETSLQKAGLWNEVKDRLHEPGTGLSGGQQQRLCIARAIAVSPEVILMDEPCSALDPIATAKVEELIDELRENYTIVIVTHSMQQAARVSQRTAMFHLGYLVEEGPTDKMFTNPEEKRTQDYITGRFG</sequence>
<evidence type="ECO:0000255" key="1">
    <source>
        <dbReference type="HAMAP-Rule" id="MF_01702"/>
    </source>
</evidence>
<gene>
    <name evidence="1" type="primary">pstB</name>
    <name type="ordered locus">Meso_3118</name>
</gene>
<accession>Q11DN5</accession>
<name>PSTB_CHESB</name>
<keyword id="KW-0067">ATP-binding</keyword>
<keyword id="KW-0997">Cell inner membrane</keyword>
<keyword id="KW-1003">Cell membrane</keyword>
<keyword id="KW-0472">Membrane</keyword>
<keyword id="KW-0547">Nucleotide-binding</keyword>
<keyword id="KW-0592">Phosphate transport</keyword>
<keyword id="KW-1278">Translocase</keyword>
<keyword id="KW-0813">Transport</keyword>
<organism>
    <name type="scientific">Chelativorans sp. (strain BNC1)</name>
    <dbReference type="NCBI Taxonomy" id="266779"/>
    <lineage>
        <taxon>Bacteria</taxon>
        <taxon>Pseudomonadati</taxon>
        <taxon>Pseudomonadota</taxon>
        <taxon>Alphaproteobacteria</taxon>
        <taxon>Hyphomicrobiales</taxon>
        <taxon>Phyllobacteriaceae</taxon>
        <taxon>Chelativorans</taxon>
    </lineage>
</organism>